<keyword id="KW-0539">Nucleus</keyword>
<keyword id="KW-1185">Reference proteome</keyword>
<keyword id="KW-0694">RNA-binding</keyword>
<protein>
    <recommendedName>
        <fullName>RNA-binding protein PNO1</fullName>
    </recommendedName>
</protein>
<reference key="1">
    <citation type="journal article" date="2005" name="Genome Biol.">
        <title>Full-length cDNAs from chicken bursal lymphocytes to facilitate gene function analysis.</title>
        <authorList>
            <person name="Caldwell R.B."/>
            <person name="Kierzek A.M."/>
            <person name="Arakawa H."/>
            <person name="Bezzubov Y."/>
            <person name="Zaim J."/>
            <person name="Fiedler P."/>
            <person name="Kutter S."/>
            <person name="Blagodatski A."/>
            <person name="Kostovska D."/>
            <person name="Koter M."/>
            <person name="Plachy J."/>
            <person name="Carninci P."/>
            <person name="Hayashizaki Y."/>
            <person name="Buerstedde J.-M."/>
        </authorList>
    </citation>
    <scope>NUCLEOTIDE SEQUENCE [LARGE SCALE MRNA]</scope>
    <source>
        <strain>CB</strain>
        <tissue>Bursa of Fabricius</tissue>
    </source>
</reference>
<dbReference type="EMBL" id="AJ851486">
    <property type="protein sequence ID" value="CAH65120.1"/>
    <property type="molecule type" value="mRNA"/>
</dbReference>
<dbReference type="RefSeq" id="NP_001072958.1">
    <property type="nucleotide sequence ID" value="NM_001079490.2"/>
</dbReference>
<dbReference type="SMR" id="Q5F414"/>
<dbReference type="FunCoup" id="Q5F414">
    <property type="interactions" value="1408"/>
</dbReference>
<dbReference type="STRING" id="9031.ENSGALP00000014788"/>
<dbReference type="PaxDb" id="9031-ENSGALP00000014788"/>
<dbReference type="Ensembl" id="ENSGALT00010042942.1">
    <property type="protein sequence ID" value="ENSGALP00010025432.1"/>
    <property type="gene ID" value="ENSGALG00010017771.1"/>
</dbReference>
<dbReference type="GeneID" id="769547"/>
<dbReference type="KEGG" id="gga:769547"/>
<dbReference type="CTD" id="56902"/>
<dbReference type="VEuPathDB" id="HostDB:geneid_769547"/>
<dbReference type="eggNOG" id="KOG3273">
    <property type="taxonomic scope" value="Eukaryota"/>
</dbReference>
<dbReference type="GeneTree" id="ENSGT00390000018052"/>
<dbReference type="HOGENOM" id="CLU_064992_2_0_1"/>
<dbReference type="InParanoid" id="Q5F414"/>
<dbReference type="OMA" id="TPLRNNW"/>
<dbReference type="OrthoDB" id="1932641at2759"/>
<dbReference type="PhylomeDB" id="Q5F414"/>
<dbReference type="PRO" id="PR:Q5F414"/>
<dbReference type="Proteomes" id="UP000000539">
    <property type="component" value="Chromosome 3"/>
</dbReference>
<dbReference type="Bgee" id="ENSGALG00000009093">
    <property type="expression patterns" value="Expressed in muscle tissue and 14 other cell types or tissues"/>
</dbReference>
<dbReference type="GO" id="GO:0005730">
    <property type="term" value="C:nucleolus"/>
    <property type="evidence" value="ECO:0000250"/>
    <property type="project" value="UniProtKB"/>
</dbReference>
<dbReference type="GO" id="GO:0005654">
    <property type="term" value="C:nucleoplasm"/>
    <property type="evidence" value="ECO:0007669"/>
    <property type="project" value="Ensembl"/>
</dbReference>
<dbReference type="GO" id="GO:0005634">
    <property type="term" value="C:nucleus"/>
    <property type="evidence" value="ECO:0000318"/>
    <property type="project" value="GO_Central"/>
</dbReference>
<dbReference type="GO" id="GO:0032040">
    <property type="term" value="C:small-subunit processome"/>
    <property type="evidence" value="ECO:0007669"/>
    <property type="project" value="Ensembl"/>
</dbReference>
<dbReference type="GO" id="GO:0003723">
    <property type="term" value="F:RNA binding"/>
    <property type="evidence" value="ECO:0007669"/>
    <property type="project" value="UniProtKB-KW"/>
</dbReference>
<dbReference type="GO" id="GO:0042274">
    <property type="term" value="P:ribosomal small subunit biogenesis"/>
    <property type="evidence" value="ECO:0007669"/>
    <property type="project" value="Ensembl"/>
</dbReference>
<dbReference type="CDD" id="cd22391">
    <property type="entry name" value="KH-I_PNO1_rpt1"/>
    <property type="match status" value="1"/>
</dbReference>
<dbReference type="CDD" id="cd22392">
    <property type="entry name" value="KH-I_PNO1_rpt2"/>
    <property type="match status" value="1"/>
</dbReference>
<dbReference type="FunFam" id="3.30.1370.10:FF:000009">
    <property type="entry name" value="RNA-binding protein PNO1"/>
    <property type="match status" value="1"/>
</dbReference>
<dbReference type="FunFam" id="3.30.1370.10:FF:000048">
    <property type="entry name" value="RNA-binding protein PNO1 isoform X2"/>
    <property type="match status" value="1"/>
</dbReference>
<dbReference type="Gene3D" id="3.30.1370.10">
    <property type="entry name" value="K Homology domain, type 1"/>
    <property type="match status" value="2"/>
</dbReference>
<dbReference type="InterPro" id="IPR055212">
    <property type="entry name" value="KH-I_PNO1_first"/>
</dbReference>
<dbReference type="InterPro" id="IPR004087">
    <property type="entry name" value="KH_dom"/>
</dbReference>
<dbReference type="InterPro" id="IPR036612">
    <property type="entry name" value="KH_dom_type_1_sf"/>
</dbReference>
<dbReference type="InterPro" id="IPR055211">
    <property type="entry name" value="KH_PNO1_2nd"/>
</dbReference>
<dbReference type="PANTHER" id="PTHR12826">
    <property type="entry name" value="RIBONUCLEASE Y"/>
    <property type="match status" value="1"/>
</dbReference>
<dbReference type="PANTHER" id="PTHR12826:SF13">
    <property type="entry name" value="RNA-BINDING PROTEIN PNO1"/>
    <property type="match status" value="1"/>
</dbReference>
<dbReference type="Pfam" id="PF22891">
    <property type="entry name" value="KH_PNO1_2nd"/>
    <property type="match status" value="1"/>
</dbReference>
<dbReference type="SMART" id="SM00322">
    <property type="entry name" value="KH"/>
    <property type="match status" value="1"/>
</dbReference>
<dbReference type="SUPFAM" id="SSF54791">
    <property type="entry name" value="Eukaryotic type KH-domain (KH-domain type I)"/>
    <property type="match status" value="1"/>
</dbReference>
<evidence type="ECO:0000250" key="1">
    <source>
        <dbReference type="UniProtKB" id="Q9NRX1"/>
    </source>
</evidence>
<evidence type="ECO:0000256" key="2">
    <source>
        <dbReference type="SAM" id="MobiDB-lite"/>
    </source>
</evidence>
<evidence type="ECO:0000305" key="3"/>
<proteinExistence type="evidence at transcript level"/>
<accession>Q5F414</accession>
<organism>
    <name type="scientific">Gallus gallus</name>
    <name type="common">Chicken</name>
    <dbReference type="NCBI Taxonomy" id="9031"/>
    <lineage>
        <taxon>Eukaryota</taxon>
        <taxon>Metazoa</taxon>
        <taxon>Chordata</taxon>
        <taxon>Craniata</taxon>
        <taxon>Vertebrata</taxon>
        <taxon>Euteleostomi</taxon>
        <taxon>Archelosauria</taxon>
        <taxon>Archosauria</taxon>
        <taxon>Dinosauria</taxon>
        <taxon>Saurischia</taxon>
        <taxon>Theropoda</taxon>
        <taxon>Coelurosauria</taxon>
        <taxon>Aves</taxon>
        <taxon>Neognathae</taxon>
        <taxon>Galloanserae</taxon>
        <taxon>Galliformes</taxon>
        <taxon>Phasianidae</taxon>
        <taxon>Phasianinae</taxon>
        <taxon>Gallus</taxon>
    </lineage>
</organism>
<sequence>METEAADESGFTSVASKRGRRKRRAAGAEPMEAAESAEAAGPQPSKRPAFPPLPAAALGVGKGEVRKVPVPANRYTPLKENWMKIFTPIVEHLQLQIRFNLKTRNVEIKTCSETKDLSALTKAADFVKAFILGFQVEDALALIRLDDLFLESFEVTDVKPLKGDHLSRAIGRIAGKGGKTKFTIENVTRTRIVLADSKIHILGSFQNIKMARTAICNLILGSPPSKVYGNIRAVASRAAERF</sequence>
<name>PNO1_CHICK</name>
<feature type="chain" id="PRO_0000270543" description="RNA-binding protein PNO1">
    <location>
        <begin position="1"/>
        <end position="242"/>
    </location>
</feature>
<feature type="domain" description="KH">
    <location>
        <begin position="158"/>
        <end position="215"/>
    </location>
</feature>
<feature type="region of interest" description="Disordered" evidence="2">
    <location>
        <begin position="1"/>
        <end position="53"/>
    </location>
</feature>
<feature type="compositionally biased region" description="Low complexity" evidence="2">
    <location>
        <begin position="27"/>
        <end position="40"/>
    </location>
</feature>
<comment type="function">
    <text evidence="1">Positively regulates dimethylation of two adjacent adenosines in the loop of a conserved hairpin near the 3'-end of 18S rRNA.</text>
</comment>
<comment type="subcellular location">
    <subcellularLocation>
        <location evidence="1">Nucleus</location>
        <location evidence="1">Nucleolus</location>
    </subcellularLocation>
</comment>
<comment type="similarity">
    <text evidence="3">Belongs to the PNO1 family.</text>
</comment>
<gene>
    <name type="primary">PNO1</name>
    <name type="ORF">RCJMB04_3n12</name>
</gene>